<accession>B9SBU9</accession>
<accession>G5CT98</accession>
<reference key="1">
    <citation type="journal article" date="2012" name="Phytochemistry">
        <title>Functional characterization of four sesquiterpene synthases from Ricinus communis (castor bean).</title>
        <authorList>
            <person name="Xie X."/>
            <person name="Kirby J."/>
            <person name="Keasling J.D."/>
        </authorList>
    </citation>
    <scope>NUCLEOTIDE SEQUENCE [MRNA]</scope>
    <scope>FUNCTION</scope>
</reference>
<reference key="2">
    <citation type="journal article" date="2010" name="Nat. Biotechnol.">
        <title>Draft genome sequence of the oilseed species Ricinus communis.</title>
        <authorList>
            <person name="Chan A.P."/>
            <person name="Crabtree J."/>
            <person name="Zhao Q."/>
            <person name="Lorenzi H."/>
            <person name="Orvis J."/>
            <person name="Puiu D."/>
            <person name="Melake-Berhan A."/>
            <person name="Jones K.M."/>
            <person name="Redman J."/>
            <person name="Chen G."/>
            <person name="Cahoon E.B."/>
            <person name="Gedil M."/>
            <person name="Stanke M."/>
            <person name="Haas B.J."/>
            <person name="Wortman J.R."/>
            <person name="Fraser-Liggett C.M."/>
            <person name="Ravel J."/>
            <person name="Rabinowicz P.D."/>
        </authorList>
    </citation>
    <scope>NUCLEOTIDE SEQUENCE [LARGE SCALE GENOMIC DNA]</scope>
    <source>
        <strain>cv. Hale</strain>
    </source>
</reference>
<keyword id="KW-0456">Lyase</keyword>
<keyword id="KW-0460">Magnesium</keyword>
<keyword id="KW-0479">Metal-binding</keyword>
<keyword id="KW-1185">Reference proteome</keyword>
<gene>
    <name type="primary">TPS5</name>
    <name type="ORF">RCOM_1044790</name>
</gene>
<organism>
    <name type="scientific">Ricinus communis</name>
    <name type="common">Castor bean</name>
    <dbReference type="NCBI Taxonomy" id="3988"/>
    <lineage>
        <taxon>Eukaryota</taxon>
        <taxon>Viridiplantae</taxon>
        <taxon>Streptophyta</taxon>
        <taxon>Embryophyta</taxon>
        <taxon>Tracheophyta</taxon>
        <taxon>Spermatophyta</taxon>
        <taxon>Magnoliopsida</taxon>
        <taxon>eudicotyledons</taxon>
        <taxon>Gunneridae</taxon>
        <taxon>Pentapetalae</taxon>
        <taxon>rosids</taxon>
        <taxon>fabids</taxon>
        <taxon>Malpighiales</taxon>
        <taxon>Euphorbiaceae</taxon>
        <taxon>Acalyphoideae</taxon>
        <taxon>Acalypheae</taxon>
        <taxon>Ricinus</taxon>
    </lineage>
</organism>
<feature type="chain" id="PRO_0000422203" description="Terpene synthase 5">
    <location>
        <begin position="1"/>
        <end position="552"/>
    </location>
</feature>
<feature type="short sequence motif" description="DDXXD motif">
    <location>
        <begin position="307"/>
        <end position="311"/>
    </location>
</feature>
<feature type="binding site" evidence="1">
    <location>
        <position position="307"/>
    </location>
    <ligand>
        <name>Mg(2+)</name>
        <dbReference type="ChEBI" id="CHEBI:18420"/>
        <label>1</label>
    </ligand>
</feature>
<feature type="binding site" evidence="1">
    <location>
        <position position="307"/>
    </location>
    <ligand>
        <name>Mg(2+)</name>
        <dbReference type="ChEBI" id="CHEBI:18420"/>
        <label>2</label>
    </ligand>
</feature>
<feature type="binding site" evidence="1">
    <location>
        <position position="311"/>
    </location>
    <ligand>
        <name>Mg(2+)</name>
        <dbReference type="ChEBI" id="CHEBI:18420"/>
        <label>1</label>
    </ligand>
</feature>
<feature type="binding site" evidence="1">
    <location>
        <position position="311"/>
    </location>
    <ligand>
        <name>Mg(2+)</name>
        <dbReference type="ChEBI" id="CHEBI:18420"/>
        <label>2</label>
    </ligand>
</feature>
<feature type="binding site" evidence="1">
    <location>
        <position position="457"/>
    </location>
    <ligand>
        <name>Mg(2+)</name>
        <dbReference type="ChEBI" id="CHEBI:18420"/>
        <label>3</label>
    </ligand>
</feature>
<feature type="sequence conflict" description="In Ref. 1; AEQ27767." evidence="3" ref="1">
    <original>I</original>
    <variation>T</variation>
    <location>
        <position position="335"/>
    </location>
</feature>
<feature type="sequence conflict" description="In Ref. 1; AEQ27767." evidence="3" ref="1">
    <original>L</original>
    <variation>V</variation>
    <location>
        <position position="377"/>
    </location>
</feature>
<feature type="sequence conflict" description="In Ref. 1; AEQ27767." evidence="3" ref="1">
    <original>F</original>
    <variation>I</variation>
    <location>
        <position position="428"/>
    </location>
</feature>
<feature type="sequence conflict" description="In Ref. 1; AEQ27767." evidence="3" ref="1">
    <original>T</original>
    <variation>I</variation>
    <location>
        <position position="505"/>
    </location>
</feature>
<feature type="sequence conflict" description="In Ref. 1; AEQ27767." evidence="3" ref="1">
    <original>V</original>
    <variation>A</variation>
    <location>
        <position position="518"/>
    </location>
</feature>
<feature type="sequence conflict" description="In Ref. 1; AEQ27767." evidence="3" ref="1">
    <original>T</original>
    <variation>S</variation>
    <location>
        <position position="524"/>
    </location>
</feature>
<feature type="sequence conflict" description="In Ref. 1; AEQ27767." evidence="3" ref="1">
    <original>F</original>
    <variation>S</variation>
    <location>
        <position position="541"/>
    </location>
</feature>
<sequence length="552" mass="64624">MATEGLLSAETDQDVARFLANFPPTEWGYSFASLLPQDSEFESHTKELDLVKEKVKDMLMQSRKELTENIEFVNCLCRLGVSYHFESEIIEQLSHIFISLPKILEENDYSLYILTLLFRVLRQHGYKMPCDVFNKFKDSNGEFKKCMTADVRGLLSLYEATFLSVHGEDILDEALAFTRQHLETLAEKSSPHLARHIRNALHLPFHHAPERLEILQYICFYEGEKSMNETLLKFAKLDFNRLQLLYRKELGLLSRWWKDINLTEKLPYTRDRIVEAYAWAAGIIIDPQFSRARLQFAKHLILISVMDDTYDSYGTFDELKHFTAALQRFTFEPTIELPEYMKFLYNILWNFFQETEKDETQGCACKTSFAREMLKELARSYFAEAEWYNDGVLPTFDEFMQFGLVSSTFDYHASAFFLGVEDLGMKEFIWLRDNPTIAKTAKLFGRLFNDIAIREDEQKKGDYPSAIKCYMNDHDVSLEKAKEDILKMLEDGWKDMNEELMKPTTVPKILTKFSINFVRMSDFTYRGGIDKYTCGTELKEFVKKLTIFPLQI</sequence>
<evidence type="ECO:0000250" key="1"/>
<evidence type="ECO:0000269" key="2">
    <source>
    </source>
</evidence>
<evidence type="ECO:0000305" key="3"/>
<name>TPS5_RICCO</name>
<comment type="function">
    <text evidence="2">Catalyzes the cyclization of farnesyl diphosphate to multiple sesquiterpenes, such as olefins and sesquiterpene alcohols.</text>
</comment>
<comment type="cofactor">
    <cofactor evidence="1">
        <name>Mg(2+)</name>
        <dbReference type="ChEBI" id="CHEBI:18420"/>
    </cofactor>
    <text evidence="1">Binds 3 Mg(2+) ions per subunit.</text>
</comment>
<comment type="domain">
    <text evidence="1">The Asp-Asp-Xaa-Xaa-Asp/Glu (DDXXD/E) motif is important for the catalytic activity, presumably through binding to Mg(2+).</text>
</comment>
<comment type="similarity">
    <text evidence="3">Belongs to the terpene synthase family.</text>
</comment>
<comment type="sequence caution" evidence="3">
    <conflict type="erroneous gene model prediction">
        <sequence resource="EMBL-CDS" id="EEF38927"/>
    </conflict>
</comment>
<proteinExistence type="evidence at transcript level"/>
<dbReference type="EC" id="4.2.3.-"/>
<dbReference type="EMBL" id="JN315865">
    <property type="protein sequence ID" value="AEQ27767.1"/>
    <property type="molecule type" value="mRNA"/>
</dbReference>
<dbReference type="EMBL" id="EQ973917">
    <property type="protein sequence ID" value="EEF38927.1"/>
    <property type="status" value="ALT_SEQ"/>
    <property type="molecule type" value="Genomic_DNA"/>
</dbReference>
<dbReference type="RefSeq" id="NP_001310688.1">
    <property type="nucleotide sequence ID" value="NM_001323759.1"/>
</dbReference>
<dbReference type="RefSeq" id="XP_015577437.1">
    <property type="nucleotide sequence ID" value="XM_015721951.1"/>
</dbReference>
<dbReference type="SMR" id="B9SBU9"/>
<dbReference type="STRING" id="3988.B9SBU9"/>
<dbReference type="GeneID" id="8282476"/>
<dbReference type="KEGG" id="rcu:8282476"/>
<dbReference type="InParanoid" id="B9SBU9"/>
<dbReference type="OrthoDB" id="819893at2759"/>
<dbReference type="Proteomes" id="UP000008311">
    <property type="component" value="Unassembled WGS sequence"/>
</dbReference>
<dbReference type="GO" id="GO:0000287">
    <property type="term" value="F:magnesium ion binding"/>
    <property type="evidence" value="ECO:0007669"/>
    <property type="project" value="InterPro"/>
</dbReference>
<dbReference type="GO" id="GO:0010334">
    <property type="term" value="F:sesquiterpene synthase activity"/>
    <property type="evidence" value="ECO:0000314"/>
    <property type="project" value="UniProtKB"/>
</dbReference>
<dbReference type="GO" id="GO:0016102">
    <property type="term" value="P:diterpenoid biosynthetic process"/>
    <property type="evidence" value="ECO:0007669"/>
    <property type="project" value="InterPro"/>
</dbReference>
<dbReference type="GO" id="GO:1900674">
    <property type="term" value="P:olefin biosynthetic process"/>
    <property type="evidence" value="ECO:0000314"/>
    <property type="project" value="UniProtKB"/>
</dbReference>
<dbReference type="CDD" id="cd00684">
    <property type="entry name" value="Terpene_cyclase_plant_C1"/>
    <property type="match status" value="1"/>
</dbReference>
<dbReference type="FunFam" id="1.10.600.10:FF:000007">
    <property type="entry name" value="Isoprene synthase, chloroplastic"/>
    <property type="match status" value="1"/>
</dbReference>
<dbReference type="FunFam" id="1.50.10.130:FF:000001">
    <property type="entry name" value="Isoprene synthase, chloroplastic"/>
    <property type="match status" value="1"/>
</dbReference>
<dbReference type="Gene3D" id="1.10.600.10">
    <property type="entry name" value="Farnesyl Diphosphate Synthase"/>
    <property type="match status" value="1"/>
</dbReference>
<dbReference type="Gene3D" id="1.50.10.130">
    <property type="entry name" value="Terpene synthase, N-terminal domain"/>
    <property type="match status" value="1"/>
</dbReference>
<dbReference type="InterPro" id="IPR008949">
    <property type="entry name" value="Isoprenoid_synthase_dom_sf"/>
</dbReference>
<dbReference type="InterPro" id="IPR034741">
    <property type="entry name" value="Terpene_cyclase-like_1_C"/>
</dbReference>
<dbReference type="InterPro" id="IPR044814">
    <property type="entry name" value="Terpene_cyclase_plant_C1"/>
</dbReference>
<dbReference type="InterPro" id="IPR001906">
    <property type="entry name" value="Terpene_synth_N"/>
</dbReference>
<dbReference type="InterPro" id="IPR036965">
    <property type="entry name" value="Terpene_synth_N_sf"/>
</dbReference>
<dbReference type="InterPro" id="IPR050148">
    <property type="entry name" value="Terpene_synthase-like"/>
</dbReference>
<dbReference type="InterPro" id="IPR005630">
    <property type="entry name" value="Terpene_synthase_metal-bd"/>
</dbReference>
<dbReference type="InterPro" id="IPR008930">
    <property type="entry name" value="Terpenoid_cyclase/PrenylTrfase"/>
</dbReference>
<dbReference type="PANTHER" id="PTHR31225">
    <property type="entry name" value="OS04G0344100 PROTEIN-RELATED"/>
    <property type="match status" value="1"/>
</dbReference>
<dbReference type="PANTHER" id="PTHR31225:SF231">
    <property type="entry name" value="TERPENE SYNTHASE 6-RELATED"/>
    <property type="match status" value="1"/>
</dbReference>
<dbReference type="Pfam" id="PF01397">
    <property type="entry name" value="Terpene_synth"/>
    <property type="match status" value="1"/>
</dbReference>
<dbReference type="Pfam" id="PF03936">
    <property type="entry name" value="Terpene_synth_C"/>
    <property type="match status" value="1"/>
</dbReference>
<dbReference type="SFLD" id="SFLDS00005">
    <property type="entry name" value="Isoprenoid_Synthase_Type_I"/>
    <property type="match status" value="1"/>
</dbReference>
<dbReference type="SFLD" id="SFLDG01019">
    <property type="entry name" value="Terpene_Cyclase_Like_1_C_Termi"/>
    <property type="match status" value="1"/>
</dbReference>
<dbReference type="SUPFAM" id="SSF48239">
    <property type="entry name" value="Terpenoid cyclases/Protein prenyltransferases"/>
    <property type="match status" value="1"/>
</dbReference>
<dbReference type="SUPFAM" id="SSF48576">
    <property type="entry name" value="Terpenoid synthases"/>
    <property type="match status" value="1"/>
</dbReference>
<protein>
    <recommendedName>
        <fullName>Terpene synthase 5</fullName>
        <shortName>RcSeTPS5</shortName>
        <ecNumber>4.2.3.-</ecNumber>
    </recommendedName>
</protein>